<gene>
    <name evidence="1" type="primary">menD</name>
    <name type="ordered locus">DIP0423</name>
</gene>
<keyword id="KW-0460">Magnesium</keyword>
<keyword id="KW-0464">Manganese</keyword>
<keyword id="KW-0474">Menaquinone biosynthesis</keyword>
<keyword id="KW-0479">Metal-binding</keyword>
<keyword id="KW-1185">Reference proteome</keyword>
<keyword id="KW-0786">Thiamine pyrophosphate</keyword>
<keyword id="KW-0808">Transferase</keyword>
<reference key="1">
    <citation type="journal article" date="2003" name="Nucleic Acids Res.">
        <title>The complete genome sequence and analysis of Corynebacterium diphtheriae NCTC13129.</title>
        <authorList>
            <person name="Cerdeno-Tarraga A.-M."/>
            <person name="Efstratiou A."/>
            <person name="Dover L.G."/>
            <person name="Holden M.T.G."/>
            <person name="Pallen M.J."/>
            <person name="Bentley S.D."/>
            <person name="Besra G.S."/>
            <person name="Churcher C.M."/>
            <person name="James K.D."/>
            <person name="De Zoysa A."/>
            <person name="Chillingworth T."/>
            <person name="Cronin A."/>
            <person name="Dowd L."/>
            <person name="Feltwell T."/>
            <person name="Hamlin N."/>
            <person name="Holroyd S."/>
            <person name="Jagels K."/>
            <person name="Moule S."/>
            <person name="Quail M.A."/>
            <person name="Rabbinowitsch E."/>
            <person name="Rutherford K.M."/>
            <person name="Thomson N.R."/>
            <person name="Unwin L."/>
            <person name="Whitehead S."/>
            <person name="Barrell B.G."/>
            <person name="Parkhill J."/>
        </authorList>
    </citation>
    <scope>NUCLEOTIDE SEQUENCE [LARGE SCALE GENOMIC DNA]</scope>
    <source>
        <strain>ATCC 700971 / NCTC 13129 / Biotype gravis</strain>
    </source>
</reference>
<sequence length="509" mass="54051">MTSSPELARAVAATLARHVTDVVICPGSRNSPLSLELIARDDIRVHTRIDERSAAFLALGLARSSKRHVAVVTTSGTAVANCAPAMIEAAYSHTPLIMVSADRPERLHGTGANQTIEQRGIFNVVDTDHVVDITDLNSISFARNVIHINVALDVPLVDVLPEVGDPVERVREVIEVDHGEVVLNLNERILVVAGDEAWEVPGLEDVPTIAEPSAPAPYHPVHPLAAQIFAHKEIKPEHIVVVGHPTLHRAVLSLLADVPVTVLTKTDTITGNPQAVGSRVKVTGELDKRWLQICEDASTLCADRVKEVLEGHGFTGLHVAAAVADTMAVGDTLFLGASNPVRDASLVGMPLGGVDIFAARGAAGIDGTVSQAVGVALDVQHRDATAIRADRTVALMGDVTFLHDVGGLLGARPENLTIVVANDDGCGIFETLEIGAPEFRPSFEQAFGTPHGVHIEAIAQAYGVNYLRAETLPELIEALIDTTDSAGFNIIEAVTTRSTRRDIDKALTL</sequence>
<organism>
    <name type="scientific">Corynebacterium diphtheriae (strain ATCC 700971 / NCTC 13129 / Biotype gravis)</name>
    <dbReference type="NCBI Taxonomy" id="257309"/>
    <lineage>
        <taxon>Bacteria</taxon>
        <taxon>Bacillati</taxon>
        <taxon>Actinomycetota</taxon>
        <taxon>Actinomycetes</taxon>
        <taxon>Mycobacteriales</taxon>
        <taxon>Corynebacteriaceae</taxon>
        <taxon>Corynebacterium</taxon>
    </lineage>
</organism>
<proteinExistence type="inferred from homology"/>
<dbReference type="EC" id="2.2.1.9" evidence="1"/>
<dbReference type="EMBL" id="BX248355">
    <property type="protein sequence ID" value="CAE48927.1"/>
    <property type="molecule type" value="Genomic_DNA"/>
</dbReference>
<dbReference type="RefSeq" id="WP_010934292.1">
    <property type="nucleotide sequence ID" value="NC_002935.2"/>
</dbReference>
<dbReference type="SMR" id="Q6NJH8"/>
<dbReference type="STRING" id="257309.DIP0423"/>
<dbReference type="DNASU" id="2649096"/>
<dbReference type="KEGG" id="cdi:DIP0423"/>
<dbReference type="HOGENOM" id="CLU_006051_4_0_11"/>
<dbReference type="UniPathway" id="UPA00079"/>
<dbReference type="UniPathway" id="UPA01057">
    <property type="reaction ID" value="UER00164"/>
</dbReference>
<dbReference type="Proteomes" id="UP000002198">
    <property type="component" value="Chromosome"/>
</dbReference>
<dbReference type="GO" id="GO:0070204">
    <property type="term" value="F:2-succinyl-5-enolpyruvyl-6-hydroxy-3-cyclohexene-1-carboxylic-acid synthase activity"/>
    <property type="evidence" value="ECO:0007669"/>
    <property type="project" value="UniProtKB-UniRule"/>
</dbReference>
<dbReference type="GO" id="GO:0000287">
    <property type="term" value="F:magnesium ion binding"/>
    <property type="evidence" value="ECO:0007669"/>
    <property type="project" value="UniProtKB-UniRule"/>
</dbReference>
<dbReference type="GO" id="GO:0030145">
    <property type="term" value="F:manganese ion binding"/>
    <property type="evidence" value="ECO:0007669"/>
    <property type="project" value="UniProtKB-UniRule"/>
</dbReference>
<dbReference type="GO" id="GO:0030976">
    <property type="term" value="F:thiamine pyrophosphate binding"/>
    <property type="evidence" value="ECO:0007669"/>
    <property type="project" value="UniProtKB-UniRule"/>
</dbReference>
<dbReference type="GO" id="GO:0009234">
    <property type="term" value="P:menaquinone biosynthetic process"/>
    <property type="evidence" value="ECO:0007669"/>
    <property type="project" value="UniProtKB-UniRule"/>
</dbReference>
<dbReference type="CDD" id="cd07037">
    <property type="entry name" value="TPP_PYR_MenD"/>
    <property type="match status" value="1"/>
</dbReference>
<dbReference type="CDD" id="cd02009">
    <property type="entry name" value="TPP_SHCHC_synthase"/>
    <property type="match status" value="1"/>
</dbReference>
<dbReference type="Gene3D" id="3.40.50.970">
    <property type="match status" value="2"/>
</dbReference>
<dbReference type="HAMAP" id="MF_01659">
    <property type="entry name" value="MenD"/>
    <property type="match status" value="1"/>
</dbReference>
<dbReference type="InterPro" id="IPR004433">
    <property type="entry name" value="MenaQ_synth_MenD"/>
</dbReference>
<dbReference type="InterPro" id="IPR029061">
    <property type="entry name" value="THDP-binding"/>
</dbReference>
<dbReference type="InterPro" id="IPR012001">
    <property type="entry name" value="Thiamin_PyroP_enz_TPP-bd_dom"/>
</dbReference>
<dbReference type="InterPro" id="IPR011766">
    <property type="entry name" value="TPP_enzyme_TPP-bd"/>
</dbReference>
<dbReference type="NCBIfam" id="TIGR00173">
    <property type="entry name" value="menD"/>
    <property type="match status" value="1"/>
</dbReference>
<dbReference type="PANTHER" id="PTHR42916">
    <property type="entry name" value="2-SUCCINYL-5-ENOLPYRUVYL-6-HYDROXY-3-CYCLOHEXENE-1-CARBOXYLATE SYNTHASE"/>
    <property type="match status" value="1"/>
</dbReference>
<dbReference type="PANTHER" id="PTHR42916:SF1">
    <property type="entry name" value="PROTEIN PHYLLO, CHLOROPLASTIC"/>
    <property type="match status" value="1"/>
</dbReference>
<dbReference type="Pfam" id="PF02775">
    <property type="entry name" value="TPP_enzyme_C"/>
    <property type="match status" value="1"/>
</dbReference>
<dbReference type="Pfam" id="PF02776">
    <property type="entry name" value="TPP_enzyme_N"/>
    <property type="match status" value="1"/>
</dbReference>
<dbReference type="PIRSF" id="PIRSF004983">
    <property type="entry name" value="MenD"/>
    <property type="match status" value="1"/>
</dbReference>
<dbReference type="SUPFAM" id="SSF52518">
    <property type="entry name" value="Thiamin diphosphate-binding fold (THDP-binding)"/>
    <property type="match status" value="2"/>
</dbReference>
<protein>
    <recommendedName>
        <fullName evidence="1">2-succinyl-5-enolpyruvyl-6-hydroxy-3-cyclohexene-1-carboxylate synthase</fullName>
        <shortName evidence="1">SEPHCHC synthase</shortName>
        <ecNumber evidence="1">2.2.1.9</ecNumber>
    </recommendedName>
    <alternativeName>
        <fullName evidence="1">Menaquinone biosynthesis protein MenD</fullName>
    </alternativeName>
</protein>
<accession>Q6NJH8</accession>
<evidence type="ECO:0000255" key="1">
    <source>
        <dbReference type="HAMAP-Rule" id="MF_01659"/>
    </source>
</evidence>
<comment type="function">
    <text evidence="1">Catalyzes the thiamine diphosphate-dependent decarboxylation of 2-oxoglutarate and the subsequent addition of the resulting succinic semialdehyde-thiamine pyrophosphate anion to isochorismate to yield 2-succinyl-5-enolpyruvyl-6-hydroxy-3-cyclohexene-1-carboxylate (SEPHCHC).</text>
</comment>
<comment type="catalytic activity">
    <reaction evidence="1">
        <text>isochorismate + 2-oxoglutarate + H(+) = 5-enolpyruvoyl-6-hydroxy-2-succinyl-cyclohex-3-ene-1-carboxylate + CO2</text>
        <dbReference type="Rhea" id="RHEA:25593"/>
        <dbReference type="ChEBI" id="CHEBI:15378"/>
        <dbReference type="ChEBI" id="CHEBI:16526"/>
        <dbReference type="ChEBI" id="CHEBI:16810"/>
        <dbReference type="ChEBI" id="CHEBI:29780"/>
        <dbReference type="ChEBI" id="CHEBI:58818"/>
        <dbReference type="EC" id="2.2.1.9"/>
    </reaction>
</comment>
<comment type="cofactor">
    <cofactor evidence="1">
        <name>Mg(2+)</name>
        <dbReference type="ChEBI" id="CHEBI:18420"/>
    </cofactor>
    <cofactor evidence="1">
        <name>Mn(2+)</name>
        <dbReference type="ChEBI" id="CHEBI:29035"/>
    </cofactor>
</comment>
<comment type="cofactor">
    <cofactor evidence="1">
        <name>thiamine diphosphate</name>
        <dbReference type="ChEBI" id="CHEBI:58937"/>
    </cofactor>
    <text evidence="1">Binds 1 thiamine pyrophosphate per subunit.</text>
</comment>
<comment type="pathway">
    <text evidence="1">Quinol/quinone metabolism; 1,4-dihydroxy-2-naphthoate biosynthesis; 1,4-dihydroxy-2-naphthoate from chorismate: step 2/7.</text>
</comment>
<comment type="pathway">
    <text evidence="1">Quinol/quinone metabolism; menaquinone biosynthesis.</text>
</comment>
<comment type="subunit">
    <text evidence="1">Homodimer.</text>
</comment>
<comment type="similarity">
    <text evidence="1">Belongs to the TPP enzyme family. MenD subfamily.</text>
</comment>
<feature type="chain" id="PRO_0000341726" description="2-succinyl-5-enolpyruvyl-6-hydroxy-3-cyclohexene-1-carboxylate synthase">
    <location>
        <begin position="1"/>
        <end position="509"/>
    </location>
</feature>
<name>MEND_CORDI</name>